<protein>
    <recommendedName>
        <fullName evidence="1">Large ribosomal subunit protein uL16</fullName>
    </recommendedName>
    <alternativeName>
        <fullName evidence="2">50S ribosomal protein L16</fullName>
    </alternativeName>
</protein>
<organism>
    <name type="scientific">Xylella fastidiosa (strain M23)</name>
    <dbReference type="NCBI Taxonomy" id="405441"/>
    <lineage>
        <taxon>Bacteria</taxon>
        <taxon>Pseudomonadati</taxon>
        <taxon>Pseudomonadota</taxon>
        <taxon>Gammaproteobacteria</taxon>
        <taxon>Lysobacterales</taxon>
        <taxon>Lysobacteraceae</taxon>
        <taxon>Xylella</taxon>
    </lineage>
</organism>
<accession>B2I8H6</accession>
<comment type="function">
    <text evidence="1">Binds 23S rRNA and is also seen to make contacts with the A and possibly P site tRNAs.</text>
</comment>
<comment type="subunit">
    <text evidence="1">Part of the 50S ribosomal subunit.</text>
</comment>
<comment type="similarity">
    <text evidence="1">Belongs to the universal ribosomal protein uL16 family.</text>
</comment>
<keyword id="KW-0687">Ribonucleoprotein</keyword>
<keyword id="KW-0689">Ribosomal protein</keyword>
<keyword id="KW-0694">RNA-binding</keyword>
<keyword id="KW-0699">rRNA-binding</keyword>
<keyword id="KW-0820">tRNA-binding</keyword>
<gene>
    <name evidence="1" type="primary">rplP</name>
    <name type="ordered locus">XfasM23_0440</name>
</gene>
<reference key="1">
    <citation type="journal article" date="2010" name="J. Bacteriol.">
        <title>Whole genome sequences of two Xylella fastidiosa strains (M12 and M23) causing almond leaf scorch disease in California.</title>
        <authorList>
            <person name="Chen J."/>
            <person name="Xie G."/>
            <person name="Han S."/>
            <person name="Chertkov O."/>
            <person name="Sims D."/>
            <person name="Civerolo E.L."/>
        </authorList>
    </citation>
    <scope>NUCLEOTIDE SEQUENCE [LARGE SCALE GENOMIC DNA]</scope>
    <source>
        <strain>M23</strain>
    </source>
</reference>
<dbReference type="EMBL" id="CP001011">
    <property type="protein sequence ID" value="ACB91887.1"/>
    <property type="molecule type" value="Genomic_DNA"/>
</dbReference>
<dbReference type="RefSeq" id="WP_004086531.1">
    <property type="nucleotide sequence ID" value="NC_010577.1"/>
</dbReference>
<dbReference type="SMR" id="B2I8H6"/>
<dbReference type="GeneID" id="93904146"/>
<dbReference type="KEGG" id="xfn:XfasM23_0440"/>
<dbReference type="HOGENOM" id="CLU_078858_2_1_6"/>
<dbReference type="Proteomes" id="UP000001698">
    <property type="component" value="Chromosome"/>
</dbReference>
<dbReference type="GO" id="GO:0022625">
    <property type="term" value="C:cytosolic large ribosomal subunit"/>
    <property type="evidence" value="ECO:0007669"/>
    <property type="project" value="TreeGrafter"/>
</dbReference>
<dbReference type="GO" id="GO:0019843">
    <property type="term" value="F:rRNA binding"/>
    <property type="evidence" value="ECO:0007669"/>
    <property type="project" value="UniProtKB-UniRule"/>
</dbReference>
<dbReference type="GO" id="GO:0003735">
    <property type="term" value="F:structural constituent of ribosome"/>
    <property type="evidence" value="ECO:0007669"/>
    <property type="project" value="InterPro"/>
</dbReference>
<dbReference type="GO" id="GO:0000049">
    <property type="term" value="F:tRNA binding"/>
    <property type="evidence" value="ECO:0007669"/>
    <property type="project" value="UniProtKB-KW"/>
</dbReference>
<dbReference type="GO" id="GO:0006412">
    <property type="term" value="P:translation"/>
    <property type="evidence" value="ECO:0007669"/>
    <property type="project" value="UniProtKB-UniRule"/>
</dbReference>
<dbReference type="CDD" id="cd01433">
    <property type="entry name" value="Ribosomal_L16_L10e"/>
    <property type="match status" value="1"/>
</dbReference>
<dbReference type="FunFam" id="3.90.1170.10:FF:000001">
    <property type="entry name" value="50S ribosomal protein L16"/>
    <property type="match status" value="1"/>
</dbReference>
<dbReference type="Gene3D" id="3.90.1170.10">
    <property type="entry name" value="Ribosomal protein L10e/L16"/>
    <property type="match status" value="1"/>
</dbReference>
<dbReference type="HAMAP" id="MF_01342">
    <property type="entry name" value="Ribosomal_uL16"/>
    <property type="match status" value="1"/>
</dbReference>
<dbReference type="InterPro" id="IPR047873">
    <property type="entry name" value="Ribosomal_uL16"/>
</dbReference>
<dbReference type="InterPro" id="IPR000114">
    <property type="entry name" value="Ribosomal_uL16_bact-type"/>
</dbReference>
<dbReference type="InterPro" id="IPR020798">
    <property type="entry name" value="Ribosomal_uL16_CS"/>
</dbReference>
<dbReference type="InterPro" id="IPR016180">
    <property type="entry name" value="Ribosomal_uL16_dom"/>
</dbReference>
<dbReference type="InterPro" id="IPR036920">
    <property type="entry name" value="Ribosomal_uL16_sf"/>
</dbReference>
<dbReference type="NCBIfam" id="TIGR01164">
    <property type="entry name" value="rplP_bact"/>
    <property type="match status" value="1"/>
</dbReference>
<dbReference type="PANTHER" id="PTHR12220">
    <property type="entry name" value="50S/60S RIBOSOMAL PROTEIN L16"/>
    <property type="match status" value="1"/>
</dbReference>
<dbReference type="PANTHER" id="PTHR12220:SF13">
    <property type="entry name" value="LARGE RIBOSOMAL SUBUNIT PROTEIN UL16M"/>
    <property type="match status" value="1"/>
</dbReference>
<dbReference type="Pfam" id="PF00252">
    <property type="entry name" value="Ribosomal_L16"/>
    <property type="match status" value="1"/>
</dbReference>
<dbReference type="PRINTS" id="PR00060">
    <property type="entry name" value="RIBOSOMALL16"/>
</dbReference>
<dbReference type="SUPFAM" id="SSF54686">
    <property type="entry name" value="Ribosomal protein L16p/L10e"/>
    <property type="match status" value="1"/>
</dbReference>
<dbReference type="PROSITE" id="PS00701">
    <property type="entry name" value="RIBOSOMAL_L16_2"/>
    <property type="match status" value="1"/>
</dbReference>
<proteinExistence type="inferred from homology"/>
<name>RL16_XYLF2</name>
<sequence length="137" mass="15492">MLQPKRTKYRKMHKGRNCGLSWNANVVSFGQYGLRATAHGQLTARQIEAARRSISRYVKRGGKLLIRVFPDKPITKKPIEVRMGSGKGNVEYWVAQIQPGRMIYEIEGVSEDVAREAFRLAASKLSVTTAFVVRTVR</sequence>
<feature type="chain" id="PRO_1000143053" description="Large ribosomal subunit protein uL16">
    <location>
        <begin position="1"/>
        <end position="137"/>
    </location>
</feature>
<evidence type="ECO:0000255" key="1">
    <source>
        <dbReference type="HAMAP-Rule" id="MF_01342"/>
    </source>
</evidence>
<evidence type="ECO:0000305" key="2"/>